<evidence type="ECO:0000255" key="1">
    <source>
        <dbReference type="HAMAP-Rule" id="MF_00117"/>
    </source>
</evidence>
<feature type="chain" id="PRO_0000238059" description="33 kDa chaperonin">
    <location>
        <begin position="1"/>
        <end position="291"/>
    </location>
</feature>
<feature type="disulfide bond" description="Redox-active" evidence="1">
    <location>
        <begin position="237"/>
        <end position="239"/>
    </location>
</feature>
<feature type="disulfide bond" description="Redox-active" evidence="1">
    <location>
        <begin position="270"/>
        <end position="273"/>
    </location>
</feature>
<dbReference type="EMBL" id="CP000001">
    <property type="protein sequence ID" value="AAU20169.1"/>
    <property type="molecule type" value="Genomic_DNA"/>
</dbReference>
<dbReference type="RefSeq" id="WP_000656366.1">
    <property type="nucleotide sequence ID" value="NZ_CP009968.1"/>
</dbReference>
<dbReference type="SMR" id="Q63HD2"/>
<dbReference type="GeneID" id="75083333"/>
<dbReference type="KEGG" id="bcz:BCE33L0062"/>
<dbReference type="PATRIC" id="fig|288681.22.peg.91"/>
<dbReference type="Proteomes" id="UP000002612">
    <property type="component" value="Chromosome"/>
</dbReference>
<dbReference type="GO" id="GO:0005737">
    <property type="term" value="C:cytoplasm"/>
    <property type="evidence" value="ECO:0007669"/>
    <property type="project" value="UniProtKB-SubCell"/>
</dbReference>
<dbReference type="GO" id="GO:0044183">
    <property type="term" value="F:protein folding chaperone"/>
    <property type="evidence" value="ECO:0007669"/>
    <property type="project" value="TreeGrafter"/>
</dbReference>
<dbReference type="GO" id="GO:0051082">
    <property type="term" value="F:unfolded protein binding"/>
    <property type="evidence" value="ECO:0007669"/>
    <property type="project" value="UniProtKB-UniRule"/>
</dbReference>
<dbReference type="GO" id="GO:0042026">
    <property type="term" value="P:protein refolding"/>
    <property type="evidence" value="ECO:0007669"/>
    <property type="project" value="TreeGrafter"/>
</dbReference>
<dbReference type="CDD" id="cd00498">
    <property type="entry name" value="Hsp33"/>
    <property type="match status" value="1"/>
</dbReference>
<dbReference type="Gene3D" id="3.55.30.10">
    <property type="entry name" value="Hsp33 domain"/>
    <property type="match status" value="1"/>
</dbReference>
<dbReference type="Gene3D" id="3.90.1280.10">
    <property type="entry name" value="HSP33 redox switch-like"/>
    <property type="match status" value="1"/>
</dbReference>
<dbReference type="HAMAP" id="MF_00117">
    <property type="entry name" value="HslO"/>
    <property type="match status" value="1"/>
</dbReference>
<dbReference type="InterPro" id="IPR000397">
    <property type="entry name" value="Heat_shock_Hsp33"/>
</dbReference>
<dbReference type="InterPro" id="IPR016154">
    <property type="entry name" value="Heat_shock_Hsp33_C"/>
</dbReference>
<dbReference type="InterPro" id="IPR016153">
    <property type="entry name" value="Heat_shock_Hsp33_N"/>
</dbReference>
<dbReference type="NCBIfam" id="NF001033">
    <property type="entry name" value="PRK00114.1"/>
    <property type="match status" value="1"/>
</dbReference>
<dbReference type="PANTHER" id="PTHR30111">
    <property type="entry name" value="33 KDA CHAPERONIN"/>
    <property type="match status" value="1"/>
</dbReference>
<dbReference type="PANTHER" id="PTHR30111:SF1">
    <property type="entry name" value="33 KDA CHAPERONIN"/>
    <property type="match status" value="1"/>
</dbReference>
<dbReference type="Pfam" id="PF01430">
    <property type="entry name" value="HSP33"/>
    <property type="match status" value="1"/>
</dbReference>
<dbReference type="PIRSF" id="PIRSF005261">
    <property type="entry name" value="Heat_shock_Hsp33"/>
    <property type="match status" value="1"/>
</dbReference>
<dbReference type="SUPFAM" id="SSF64397">
    <property type="entry name" value="Hsp33 domain"/>
    <property type="match status" value="1"/>
</dbReference>
<dbReference type="SUPFAM" id="SSF118352">
    <property type="entry name" value="HSP33 redox switch-like"/>
    <property type="match status" value="1"/>
</dbReference>
<gene>
    <name evidence="1" type="primary">hslO</name>
    <name type="ordered locus">BCE33L0062</name>
</gene>
<proteinExistence type="inferred from homology"/>
<sequence length="291" mass="32058">MKDYLVKALAFDGEVRAYSVRTTNTVSEAQRRHDTWRTASAALGRSLTAGTMMGAMLKGDQKLTIKVEGNGPIGPILVDAHANGDVRGYVTNPHVDFEGTEQGKLRVYQAVGTEGFVTVIKDIGMREPFIGQSPIVSGELGEDFTYYFAVSEQTPSSVGVGVLVNGDDSILAAGGFILQIMPGAQEETISFIEERLQKIPPVSTLIEQGLSPEELLYAVLGEDKVKVLETMDVQFNCTCSRERIESVLISLGKTELEQVREEEEETEVHCHFCNERYKFSKEDITNLIENL</sequence>
<comment type="function">
    <text evidence="1">Redox regulated molecular chaperone. Protects both thermally unfolding and oxidatively damaged proteins from irreversible aggregation. Plays an important role in the bacterial defense system toward oxidative stress.</text>
</comment>
<comment type="subcellular location">
    <subcellularLocation>
        <location evidence="1">Cytoplasm</location>
    </subcellularLocation>
</comment>
<comment type="PTM">
    <text evidence="1">Under oxidizing conditions two disulfide bonds are formed involving the reactive cysteines. Under reducing conditions zinc is bound to the reactive cysteines and the protein is inactive.</text>
</comment>
<comment type="similarity">
    <text evidence="1">Belongs to the HSP33 family.</text>
</comment>
<keyword id="KW-0143">Chaperone</keyword>
<keyword id="KW-0963">Cytoplasm</keyword>
<keyword id="KW-1015">Disulfide bond</keyword>
<keyword id="KW-0676">Redox-active center</keyword>
<keyword id="KW-0862">Zinc</keyword>
<organism>
    <name type="scientific">Bacillus cereus (strain ZK / E33L)</name>
    <dbReference type="NCBI Taxonomy" id="288681"/>
    <lineage>
        <taxon>Bacteria</taxon>
        <taxon>Bacillati</taxon>
        <taxon>Bacillota</taxon>
        <taxon>Bacilli</taxon>
        <taxon>Bacillales</taxon>
        <taxon>Bacillaceae</taxon>
        <taxon>Bacillus</taxon>
        <taxon>Bacillus cereus group</taxon>
    </lineage>
</organism>
<reference key="1">
    <citation type="journal article" date="2006" name="J. Bacteriol.">
        <title>Pathogenomic sequence analysis of Bacillus cereus and Bacillus thuringiensis isolates closely related to Bacillus anthracis.</title>
        <authorList>
            <person name="Han C.S."/>
            <person name="Xie G."/>
            <person name="Challacombe J.F."/>
            <person name="Altherr M.R."/>
            <person name="Bhotika S.S."/>
            <person name="Bruce D."/>
            <person name="Campbell C.S."/>
            <person name="Campbell M.L."/>
            <person name="Chen J."/>
            <person name="Chertkov O."/>
            <person name="Cleland C."/>
            <person name="Dimitrijevic M."/>
            <person name="Doggett N.A."/>
            <person name="Fawcett J.J."/>
            <person name="Glavina T."/>
            <person name="Goodwin L.A."/>
            <person name="Hill K.K."/>
            <person name="Hitchcock P."/>
            <person name="Jackson P.J."/>
            <person name="Keim P."/>
            <person name="Kewalramani A.R."/>
            <person name="Longmire J."/>
            <person name="Lucas S."/>
            <person name="Malfatti S."/>
            <person name="McMurry K."/>
            <person name="Meincke L.J."/>
            <person name="Misra M."/>
            <person name="Moseman B.L."/>
            <person name="Mundt M."/>
            <person name="Munk A.C."/>
            <person name="Okinaka R.T."/>
            <person name="Parson-Quintana B."/>
            <person name="Reilly L.P."/>
            <person name="Richardson P."/>
            <person name="Robinson D.L."/>
            <person name="Rubin E."/>
            <person name="Saunders E."/>
            <person name="Tapia R."/>
            <person name="Tesmer J.G."/>
            <person name="Thayer N."/>
            <person name="Thompson L.S."/>
            <person name="Tice H."/>
            <person name="Ticknor L.O."/>
            <person name="Wills P.L."/>
            <person name="Brettin T.S."/>
            <person name="Gilna P."/>
        </authorList>
    </citation>
    <scope>NUCLEOTIDE SEQUENCE [LARGE SCALE GENOMIC DNA]</scope>
    <source>
        <strain>ZK / E33L</strain>
    </source>
</reference>
<accession>Q63HD2</accession>
<name>HSLO_BACCZ</name>
<protein>
    <recommendedName>
        <fullName evidence="1">33 kDa chaperonin</fullName>
    </recommendedName>
    <alternativeName>
        <fullName evidence="1">Heat shock protein 33 homolog</fullName>
        <shortName evidence="1">HSP33</shortName>
    </alternativeName>
</protein>